<comment type="function">
    <text evidence="2">As accessory component of the DNA polymerase epsilon (DNA polymerase II) participates in chromosomal DNA replication.</text>
</comment>
<comment type="subunit">
    <text evidence="1">Heterotetramer. Consists of four subunits: POL2, DPB2, DPB3 and DPB4 (By similarity).</text>
</comment>
<comment type="subcellular location">
    <subcellularLocation>
        <location evidence="1">Nucleus</location>
    </subcellularLocation>
</comment>
<comment type="miscellaneous">
    <text>In eukaryotes there are five DNA polymerases: alpha, beta, gamma, delta, and epsilon which are responsible for different reactions of DNA synthesis.</text>
</comment>
<comment type="similarity">
    <text evidence="3">Belongs to the DNA polymerase epsilon subunit B family.</text>
</comment>
<reference key="1">
    <citation type="journal article" date="2004" name="Nature">
        <title>Genome evolution in yeasts.</title>
        <authorList>
            <person name="Dujon B."/>
            <person name="Sherman D."/>
            <person name="Fischer G."/>
            <person name="Durrens P."/>
            <person name="Casaregola S."/>
            <person name="Lafontaine I."/>
            <person name="de Montigny J."/>
            <person name="Marck C."/>
            <person name="Neuveglise C."/>
            <person name="Talla E."/>
            <person name="Goffard N."/>
            <person name="Frangeul L."/>
            <person name="Aigle M."/>
            <person name="Anthouard V."/>
            <person name="Babour A."/>
            <person name="Barbe V."/>
            <person name="Barnay S."/>
            <person name="Blanchin S."/>
            <person name="Beckerich J.-M."/>
            <person name="Beyne E."/>
            <person name="Bleykasten C."/>
            <person name="Boisrame A."/>
            <person name="Boyer J."/>
            <person name="Cattolico L."/>
            <person name="Confanioleri F."/>
            <person name="de Daruvar A."/>
            <person name="Despons L."/>
            <person name="Fabre E."/>
            <person name="Fairhead C."/>
            <person name="Ferry-Dumazet H."/>
            <person name="Groppi A."/>
            <person name="Hantraye F."/>
            <person name="Hennequin C."/>
            <person name="Jauniaux N."/>
            <person name="Joyet P."/>
            <person name="Kachouri R."/>
            <person name="Kerrest A."/>
            <person name="Koszul R."/>
            <person name="Lemaire M."/>
            <person name="Lesur I."/>
            <person name="Ma L."/>
            <person name="Muller H."/>
            <person name="Nicaud J.-M."/>
            <person name="Nikolski M."/>
            <person name="Oztas S."/>
            <person name="Ozier-Kalogeropoulos O."/>
            <person name="Pellenz S."/>
            <person name="Potier S."/>
            <person name="Richard G.-F."/>
            <person name="Straub M.-L."/>
            <person name="Suleau A."/>
            <person name="Swennen D."/>
            <person name="Tekaia F."/>
            <person name="Wesolowski-Louvel M."/>
            <person name="Westhof E."/>
            <person name="Wirth B."/>
            <person name="Zeniou-Meyer M."/>
            <person name="Zivanovic Y."/>
            <person name="Bolotin-Fukuhara M."/>
            <person name="Thierry A."/>
            <person name="Bouchier C."/>
            <person name="Caudron B."/>
            <person name="Scarpelli C."/>
            <person name="Gaillardin C."/>
            <person name="Weissenbach J."/>
            <person name="Wincker P."/>
            <person name="Souciet J.-L."/>
        </authorList>
    </citation>
    <scope>NUCLEOTIDE SEQUENCE [LARGE SCALE GENOMIC DNA]</scope>
    <source>
        <strain>CLIB 122 / E 150</strain>
    </source>
</reference>
<feature type="chain" id="PRO_0000071572" description="DNA polymerase epsilon subunit B">
    <location>
        <begin position="1"/>
        <end position="652"/>
    </location>
</feature>
<keyword id="KW-0235">DNA replication</keyword>
<keyword id="KW-0238">DNA-binding</keyword>
<keyword id="KW-0539">Nucleus</keyword>
<keyword id="KW-1185">Reference proteome</keyword>
<protein>
    <recommendedName>
        <fullName>DNA polymerase epsilon subunit B</fullName>
    </recommendedName>
    <alternativeName>
        <fullName>DNA polymerase II subunit 2</fullName>
    </alternativeName>
</protein>
<name>DPB2_YARLI</name>
<gene>
    <name type="primary">DPB2</name>
    <name type="ordered locus">YALI0F28215g</name>
</gene>
<proteinExistence type="inferred from homology"/>
<dbReference type="EMBL" id="CR382132">
    <property type="protein sequence ID" value="CAG78794.1"/>
    <property type="molecule type" value="Genomic_DNA"/>
</dbReference>
<dbReference type="RefSeq" id="XP_505982.1">
    <property type="nucleotide sequence ID" value="XM_505982.1"/>
</dbReference>
<dbReference type="SMR" id="Q6C030"/>
<dbReference type="FunCoup" id="Q6C030">
    <property type="interactions" value="793"/>
</dbReference>
<dbReference type="STRING" id="284591.Q6C030"/>
<dbReference type="EnsemblFungi" id="CAG78794">
    <property type="protein sequence ID" value="CAG78794"/>
    <property type="gene ID" value="YALI0_F28215g"/>
</dbReference>
<dbReference type="KEGG" id="yli:2908660"/>
<dbReference type="VEuPathDB" id="FungiDB:YALI0_F28215g"/>
<dbReference type="HOGENOM" id="CLU_010628_1_0_1"/>
<dbReference type="InParanoid" id="Q6C030"/>
<dbReference type="OMA" id="PEDGAWF"/>
<dbReference type="OrthoDB" id="117794at4891"/>
<dbReference type="Proteomes" id="UP000001300">
    <property type="component" value="Chromosome F"/>
</dbReference>
<dbReference type="GO" id="GO:0005737">
    <property type="term" value="C:cytoplasm"/>
    <property type="evidence" value="ECO:0007669"/>
    <property type="project" value="EnsemblFungi"/>
</dbReference>
<dbReference type="GO" id="GO:0008622">
    <property type="term" value="C:epsilon DNA polymerase complex"/>
    <property type="evidence" value="ECO:0000318"/>
    <property type="project" value="GO_Central"/>
</dbReference>
<dbReference type="GO" id="GO:0043596">
    <property type="term" value="C:nuclear replication fork"/>
    <property type="evidence" value="ECO:0007669"/>
    <property type="project" value="EnsemblFungi"/>
</dbReference>
<dbReference type="GO" id="GO:0030337">
    <property type="term" value="F:DNA polymerase processivity factor activity"/>
    <property type="evidence" value="ECO:0007669"/>
    <property type="project" value="EnsemblFungi"/>
</dbReference>
<dbReference type="GO" id="GO:0003887">
    <property type="term" value="F:DNA-directed DNA polymerase activity"/>
    <property type="evidence" value="ECO:0007669"/>
    <property type="project" value="EnsemblFungi"/>
</dbReference>
<dbReference type="GO" id="GO:0003690">
    <property type="term" value="F:double-stranded DNA binding"/>
    <property type="evidence" value="ECO:0007669"/>
    <property type="project" value="EnsemblFungi"/>
</dbReference>
<dbReference type="GO" id="GO:0003697">
    <property type="term" value="F:single-stranded DNA binding"/>
    <property type="evidence" value="ECO:0007669"/>
    <property type="project" value="EnsemblFungi"/>
</dbReference>
<dbReference type="GO" id="GO:0006261">
    <property type="term" value="P:DNA-templated DNA replication"/>
    <property type="evidence" value="ECO:0000318"/>
    <property type="project" value="GO_Central"/>
</dbReference>
<dbReference type="GO" id="GO:0045005">
    <property type="term" value="P:DNA-templated DNA replication maintenance of fidelity"/>
    <property type="evidence" value="ECO:0007669"/>
    <property type="project" value="EnsemblFungi"/>
</dbReference>
<dbReference type="GO" id="GO:0042276">
    <property type="term" value="P:error-prone translesion synthesis"/>
    <property type="evidence" value="ECO:0000318"/>
    <property type="project" value="GO_Central"/>
</dbReference>
<dbReference type="InterPro" id="IPR007185">
    <property type="entry name" value="DNA_pol_a/d/e_bsu"/>
</dbReference>
<dbReference type="InterPro" id="IPR016266">
    <property type="entry name" value="POLE2"/>
</dbReference>
<dbReference type="PANTHER" id="PTHR12708:SF0">
    <property type="entry name" value="DNA POLYMERASE EPSILON SUBUNIT 2"/>
    <property type="match status" value="1"/>
</dbReference>
<dbReference type="PANTHER" id="PTHR12708">
    <property type="entry name" value="DNA POLYMERASE EPSILON SUBUNIT B"/>
    <property type="match status" value="1"/>
</dbReference>
<dbReference type="Pfam" id="PF04042">
    <property type="entry name" value="DNA_pol_E_B"/>
    <property type="match status" value="1"/>
</dbReference>
<sequence>MPAVLPIKLNPSQMRPVAYRIFSKKHGLNLKSTGLETLTEIIGKNYGTEWRGAEAAKMMEEICRLWKEQEMGVFVEGKPLQELFDEITASKKAKEKARVQVVSKSVGLTGVEEIEDREGEPQVNVIREAAPSVDVVWKEFFKVISAFDQPLFHYNARQQRFEKRKTKPTLFANAQSASNMFLTRYHLVYNRLLRNDDTTDLKITSIRSLIGRQGEFSIFGMLSKNPEQKICLQDDTGRILLILAAGCKPDPGVYYPEGSFVICNGRYMKSGDAEVFVVITMGPPVAEKRQETITAYGNMDYLGLHGNPHGSVVRRIERQVEASMLAEEKRLVDQKVIVFGGDMYLDNPLTLKALQKVFSTIELEFQDSGTKKPLAMVFSGDFTSQYQPPHLYKKGFDKLEELFKEFSSIITGVKIIFVPGQRDPWTNTFPTQNAVVPLQPLPTTMINRVARLCGEDVSMSSNPCRMAYLTQDMVFYRDGLSERLRKCNLQLDSAKDDSDDSDDDIEIDNDEVMINDVVVNEPESSFDFGEGLSNLTRPVDISTPMASQVGPTNTLSAKEVESRKIVRTICDQGHLSPFNRHDRPVAWDYDETLWLSPLPTILFMVDTHAPKFSLRYEECMVVNPGPFLNRKIASWVEYDPSKKTVKERQLHI</sequence>
<organism>
    <name type="scientific">Yarrowia lipolytica (strain CLIB 122 / E 150)</name>
    <name type="common">Yeast</name>
    <name type="synonym">Candida lipolytica</name>
    <dbReference type="NCBI Taxonomy" id="284591"/>
    <lineage>
        <taxon>Eukaryota</taxon>
        <taxon>Fungi</taxon>
        <taxon>Dikarya</taxon>
        <taxon>Ascomycota</taxon>
        <taxon>Saccharomycotina</taxon>
        <taxon>Dipodascomycetes</taxon>
        <taxon>Dipodascales</taxon>
        <taxon>Dipodascales incertae sedis</taxon>
        <taxon>Yarrowia</taxon>
    </lineage>
</organism>
<evidence type="ECO:0000250" key="1"/>
<evidence type="ECO:0000250" key="2">
    <source>
        <dbReference type="UniProtKB" id="P24482"/>
    </source>
</evidence>
<evidence type="ECO:0000305" key="3"/>
<accession>Q6C030</accession>